<gene>
    <name evidence="1" type="primary">nusB</name>
    <name type="ordered locus">Acid345_1215</name>
</gene>
<comment type="function">
    <text evidence="1">Involved in transcription antitermination. Required for transcription of ribosomal RNA (rRNA) genes. Binds specifically to the boxA antiterminator sequence of the ribosomal RNA (rrn) operons.</text>
</comment>
<comment type="similarity">
    <text evidence="1">Belongs to the NusB family.</text>
</comment>
<accession>Q1ISD3</accession>
<feature type="chain" id="PRO_0000265474" description="Transcription antitermination protein NusB">
    <location>
        <begin position="1"/>
        <end position="146"/>
    </location>
</feature>
<protein>
    <recommendedName>
        <fullName evidence="1">Transcription antitermination protein NusB</fullName>
    </recommendedName>
    <alternativeName>
        <fullName evidence="1">Antitermination factor NusB</fullName>
    </alternativeName>
</protein>
<sequence length="146" mass="16994">MTIKTGTRRKSRELALQMLFQMDMGKQSADHVEKTFWAERKDLEEEVRSFAIDLFHVAEKRSEEIDKLIEKHAEHWRMERMAAVDRNILRGACAEFMGFPKTPKPVVINESLEIARRFSSPESVQFINGVLDSVARELDAERKKKS</sequence>
<name>NUSB_KORVE</name>
<dbReference type="EMBL" id="CP000360">
    <property type="protein sequence ID" value="ABF40217.1"/>
    <property type="molecule type" value="Genomic_DNA"/>
</dbReference>
<dbReference type="RefSeq" id="WP_011522019.1">
    <property type="nucleotide sequence ID" value="NC_008009.1"/>
</dbReference>
<dbReference type="SMR" id="Q1ISD3"/>
<dbReference type="STRING" id="204669.Acid345_1215"/>
<dbReference type="EnsemblBacteria" id="ABF40217">
    <property type="protein sequence ID" value="ABF40217"/>
    <property type="gene ID" value="Acid345_1215"/>
</dbReference>
<dbReference type="KEGG" id="aba:Acid345_1215"/>
<dbReference type="eggNOG" id="COG0781">
    <property type="taxonomic scope" value="Bacteria"/>
</dbReference>
<dbReference type="HOGENOM" id="CLU_087843_3_3_0"/>
<dbReference type="OrthoDB" id="9811381at2"/>
<dbReference type="Proteomes" id="UP000002432">
    <property type="component" value="Chromosome"/>
</dbReference>
<dbReference type="GO" id="GO:0005829">
    <property type="term" value="C:cytosol"/>
    <property type="evidence" value="ECO:0007669"/>
    <property type="project" value="TreeGrafter"/>
</dbReference>
<dbReference type="GO" id="GO:0003723">
    <property type="term" value="F:RNA binding"/>
    <property type="evidence" value="ECO:0007669"/>
    <property type="project" value="UniProtKB-UniRule"/>
</dbReference>
<dbReference type="GO" id="GO:0006353">
    <property type="term" value="P:DNA-templated transcription termination"/>
    <property type="evidence" value="ECO:0007669"/>
    <property type="project" value="UniProtKB-UniRule"/>
</dbReference>
<dbReference type="GO" id="GO:0031564">
    <property type="term" value="P:transcription antitermination"/>
    <property type="evidence" value="ECO:0007669"/>
    <property type="project" value="UniProtKB-KW"/>
</dbReference>
<dbReference type="Gene3D" id="1.10.940.10">
    <property type="entry name" value="NusB-like"/>
    <property type="match status" value="1"/>
</dbReference>
<dbReference type="HAMAP" id="MF_00073">
    <property type="entry name" value="NusB"/>
    <property type="match status" value="1"/>
</dbReference>
<dbReference type="InterPro" id="IPR035926">
    <property type="entry name" value="NusB-like_sf"/>
</dbReference>
<dbReference type="InterPro" id="IPR011605">
    <property type="entry name" value="NusB_fam"/>
</dbReference>
<dbReference type="InterPro" id="IPR006027">
    <property type="entry name" value="NusB_RsmB_TIM44"/>
</dbReference>
<dbReference type="NCBIfam" id="TIGR01951">
    <property type="entry name" value="nusB"/>
    <property type="match status" value="1"/>
</dbReference>
<dbReference type="PANTHER" id="PTHR11078:SF3">
    <property type="entry name" value="ANTITERMINATION NUSB DOMAIN-CONTAINING PROTEIN"/>
    <property type="match status" value="1"/>
</dbReference>
<dbReference type="PANTHER" id="PTHR11078">
    <property type="entry name" value="N UTILIZATION SUBSTANCE PROTEIN B-RELATED"/>
    <property type="match status" value="1"/>
</dbReference>
<dbReference type="Pfam" id="PF01029">
    <property type="entry name" value="NusB"/>
    <property type="match status" value="1"/>
</dbReference>
<dbReference type="SUPFAM" id="SSF48013">
    <property type="entry name" value="NusB-like"/>
    <property type="match status" value="1"/>
</dbReference>
<evidence type="ECO:0000255" key="1">
    <source>
        <dbReference type="HAMAP-Rule" id="MF_00073"/>
    </source>
</evidence>
<keyword id="KW-1185">Reference proteome</keyword>
<keyword id="KW-0694">RNA-binding</keyword>
<keyword id="KW-0804">Transcription</keyword>
<keyword id="KW-0889">Transcription antitermination</keyword>
<keyword id="KW-0805">Transcription regulation</keyword>
<proteinExistence type="inferred from homology"/>
<reference key="1">
    <citation type="journal article" date="2009" name="Appl. Environ. Microbiol.">
        <title>Three genomes from the phylum Acidobacteria provide insight into the lifestyles of these microorganisms in soils.</title>
        <authorList>
            <person name="Ward N.L."/>
            <person name="Challacombe J.F."/>
            <person name="Janssen P.H."/>
            <person name="Henrissat B."/>
            <person name="Coutinho P.M."/>
            <person name="Wu M."/>
            <person name="Xie G."/>
            <person name="Haft D.H."/>
            <person name="Sait M."/>
            <person name="Badger J."/>
            <person name="Barabote R.D."/>
            <person name="Bradley B."/>
            <person name="Brettin T.S."/>
            <person name="Brinkac L.M."/>
            <person name="Bruce D."/>
            <person name="Creasy T."/>
            <person name="Daugherty S.C."/>
            <person name="Davidsen T.M."/>
            <person name="DeBoy R.T."/>
            <person name="Detter J.C."/>
            <person name="Dodson R.J."/>
            <person name="Durkin A.S."/>
            <person name="Ganapathy A."/>
            <person name="Gwinn-Giglio M."/>
            <person name="Han C.S."/>
            <person name="Khouri H."/>
            <person name="Kiss H."/>
            <person name="Kothari S.P."/>
            <person name="Madupu R."/>
            <person name="Nelson K.E."/>
            <person name="Nelson W.C."/>
            <person name="Paulsen I."/>
            <person name="Penn K."/>
            <person name="Ren Q."/>
            <person name="Rosovitz M.J."/>
            <person name="Selengut J.D."/>
            <person name="Shrivastava S."/>
            <person name="Sullivan S.A."/>
            <person name="Tapia R."/>
            <person name="Thompson L.S."/>
            <person name="Watkins K.L."/>
            <person name="Yang Q."/>
            <person name="Yu C."/>
            <person name="Zafar N."/>
            <person name="Zhou L."/>
            <person name="Kuske C.R."/>
        </authorList>
    </citation>
    <scope>NUCLEOTIDE SEQUENCE [LARGE SCALE GENOMIC DNA]</scope>
    <source>
        <strain>Ellin345</strain>
    </source>
</reference>
<organism>
    <name type="scientific">Koribacter versatilis (strain Ellin345)</name>
    <dbReference type="NCBI Taxonomy" id="204669"/>
    <lineage>
        <taxon>Bacteria</taxon>
        <taxon>Pseudomonadati</taxon>
        <taxon>Acidobacteriota</taxon>
        <taxon>Terriglobia</taxon>
        <taxon>Terriglobales</taxon>
        <taxon>Candidatus Korobacteraceae</taxon>
        <taxon>Candidatus Korobacter</taxon>
    </lineage>
</organism>